<gene>
    <name type="primary">RPL2</name>
    <name type="ordered locus">ADL127C</name>
</gene>
<feature type="chain" id="PRO_0000129758" description="Large ribosomal subunit protein uL2">
    <location>
        <begin position="1"/>
        <end position="254"/>
    </location>
</feature>
<accession>Q75AP7</accession>
<comment type="similarity">
    <text evidence="1">Belongs to the universal ribosomal protein uL2 family.</text>
</comment>
<name>RL2_EREGS</name>
<dbReference type="EMBL" id="AE016817">
    <property type="protein sequence ID" value="AAS51793.1"/>
    <property type="molecule type" value="Genomic_DNA"/>
</dbReference>
<dbReference type="RefSeq" id="NP_983969.1">
    <property type="nucleotide sequence ID" value="NM_209322.1"/>
</dbReference>
<dbReference type="SMR" id="Q75AP7"/>
<dbReference type="FunCoup" id="Q75AP7">
    <property type="interactions" value="1334"/>
</dbReference>
<dbReference type="STRING" id="284811.Q75AP7"/>
<dbReference type="EnsemblFungi" id="AAS51793">
    <property type="protein sequence ID" value="AAS51793"/>
    <property type="gene ID" value="AGOS_ADL127C"/>
</dbReference>
<dbReference type="GeneID" id="4620112"/>
<dbReference type="KEGG" id="ago:AGOS_ADL127C"/>
<dbReference type="eggNOG" id="KOG2309">
    <property type="taxonomic scope" value="Eukaryota"/>
</dbReference>
<dbReference type="HOGENOM" id="CLU_036235_0_3_1"/>
<dbReference type="InParanoid" id="Q75AP7"/>
<dbReference type="OMA" id="HPYKFKM"/>
<dbReference type="OrthoDB" id="10267824at2759"/>
<dbReference type="Proteomes" id="UP000000591">
    <property type="component" value="Chromosome IV"/>
</dbReference>
<dbReference type="GO" id="GO:0022625">
    <property type="term" value="C:cytosolic large ribosomal subunit"/>
    <property type="evidence" value="ECO:0000318"/>
    <property type="project" value="GO_Central"/>
</dbReference>
<dbReference type="GO" id="GO:0003723">
    <property type="term" value="F:RNA binding"/>
    <property type="evidence" value="ECO:0000318"/>
    <property type="project" value="GO_Central"/>
</dbReference>
<dbReference type="GO" id="GO:0019843">
    <property type="term" value="F:rRNA binding"/>
    <property type="evidence" value="ECO:0007669"/>
    <property type="project" value="UniProtKB-KW"/>
</dbReference>
<dbReference type="GO" id="GO:0003735">
    <property type="term" value="F:structural constituent of ribosome"/>
    <property type="evidence" value="ECO:0000318"/>
    <property type="project" value="GO_Central"/>
</dbReference>
<dbReference type="GO" id="GO:0002181">
    <property type="term" value="P:cytoplasmic translation"/>
    <property type="evidence" value="ECO:0000318"/>
    <property type="project" value="GO_Central"/>
</dbReference>
<dbReference type="FunFam" id="2.40.50.140:FF:000020">
    <property type="entry name" value="60S ribosomal protein L2"/>
    <property type="match status" value="1"/>
</dbReference>
<dbReference type="FunFam" id="4.10.950.10:FF:000002">
    <property type="entry name" value="60S ribosomal protein L2"/>
    <property type="match status" value="1"/>
</dbReference>
<dbReference type="FunFam" id="2.30.30.30:FF:000006">
    <property type="entry name" value="60S ribosomal protein L8"/>
    <property type="match status" value="1"/>
</dbReference>
<dbReference type="Gene3D" id="2.30.30.30">
    <property type="match status" value="1"/>
</dbReference>
<dbReference type="Gene3D" id="2.40.50.140">
    <property type="entry name" value="Nucleic acid-binding proteins"/>
    <property type="match status" value="1"/>
</dbReference>
<dbReference type="Gene3D" id="4.10.950.10">
    <property type="entry name" value="Ribosomal protein L2, domain 3"/>
    <property type="match status" value="1"/>
</dbReference>
<dbReference type="InterPro" id="IPR012340">
    <property type="entry name" value="NA-bd_OB-fold"/>
</dbReference>
<dbReference type="InterPro" id="IPR014722">
    <property type="entry name" value="Rib_uL2_dom2"/>
</dbReference>
<dbReference type="InterPro" id="IPR002171">
    <property type="entry name" value="Ribosomal_uL2"/>
</dbReference>
<dbReference type="InterPro" id="IPR022669">
    <property type="entry name" value="Ribosomal_uL2_C"/>
</dbReference>
<dbReference type="InterPro" id="IPR022671">
    <property type="entry name" value="Ribosomal_uL2_CS"/>
</dbReference>
<dbReference type="InterPro" id="IPR014726">
    <property type="entry name" value="Ribosomal_uL2_dom3"/>
</dbReference>
<dbReference type="InterPro" id="IPR022666">
    <property type="entry name" value="Ribosomal_uL2_RNA-bd_dom"/>
</dbReference>
<dbReference type="InterPro" id="IPR008991">
    <property type="entry name" value="Translation_prot_SH3-like_sf"/>
</dbReference>
<dbReference type="PANTHER" id="PTHR13691:SF16">
    <property type="entry name" value="LARGE RIBOSOMAL SUBUNIT PROTEIN UL2"/>
    <property type="match status" value="1"/>
</dbReference>
<dbReference type="PANTHER" id="PTHR13691">
    <property type="entry name" value="RIBOSOMAL PROTEIN L2"/>
    <property type="match status" value="1"/>
</dbReference>
<dbReference type="Pfam" id="PF00181">
    <property type="entry name" value="Ribosomal_L2"/>
    <property type="match status" value="1"/>
</dbReference>
<dbReference type="Pfam" id="PF03947">
    <property type="entry name" value="Ribosomal_L2_C"/>
    <property type="match status" value="1"/>
</dbReference>
<dbReference type="PIRSF" id="PIRSF002158">
    <property type="entry name" value="Ribosomal_L2"/>
    <property type="match status" value="1"/>
</dbReference>
<dbReference type="SMART" id="SM01383">
    <property type="entry name" value="Ribosomal_L2"/>
    <property type="match status" value="1"/>
</dbReference>
<dbReference type="SMART" id="SM01382">
    <property type="entry name" value="Ribosomal_L2_C"/>
    <property type="match status" value="1"/>
</dbReference>
<dbReference type="SUPFAM" id="SSF50249">
    <property type="entry name" value="Nucleic acid-binding proteins"/>
    <property type="match status" value="1"/>
</dbReference>
<dbReference type="SUPFAM" id="SSF50104">
    <property type="entry name" value="Translation proteins SH3-like domain"/>
    <property type="match status" value="1"/>
</dbReference>
<dbReference type="PROSITE" id="PS00467">
    <property type="entry name" value="RIBOSOMAL_L2"/>
    <property type="match status" value="1"/>
</dbReference>
<sequence>MGRVIRNQRKGAGSIFTSHTRLRQGAAKLRTLDYAERHGYIRGVVKQIVHDAGRGAPLAKVVFRDPYKYKLREETFIANEGVHTGQFIYAGKNASLNVGNILPLGSVPEGTIVSNVEERPGDRGALARTSGNYVIVIGHNPDENKTRIRLPSGAKKIVSSDARGVIGVIAGGGRVDKPLLKAGRAFHKYKVKRNSWPKTRGVAMNPVDHPHGGGNHQHIGKASTISRGAVSGQKAGLIAARRTGLLRGSQKTQD</sequence>
<protein>
    <recommendedName>
        <fullName evidence="1">Large ribosomal subunit protein uL2</fullName>
    </recommendedName>
    <alternativeName>
        <fullName>60S ribosomal protein L2</fullName>
    </alternativeName>
</protein>
<evidence type="ECO:0000305" key="1"/>
<keyword id="KW-1185">Reference proteome</keyword>
<keyword id="KW-0687">Ribonucleoprotein</keyword>
<keyword id="KW-0689">Ribosomal protein</keyword>
<keyword id="KW-0694">RNA-binding</keyword>
<keyword id="KW-0699">rRNA-binding</keyword>
<organism>
    <name type="scientific">Eremothecium gossypii (strain ATCC 10895 / CBS 109.51 / FGSC 9923 / NRRL Y-1056)</name>
    <name type="common">Yeast</name>
    <name type="synonym">Ashbya gossypii</name>
    <dbReference type="NCBI Taxonomy" id="284811"/>
    <lineage>
        <taxon>Eukaryota</taxon>
        <taxon>Fungi</taxon>
        <taxon>Dikarya</taxon>
        <taxon>Ascomycota</taxon>
        <taxon>Saccharomycotina</taxon>
        <taxon>Saccharomycetes</taxon>
        <taxon>Saccharomycetales</taxon>
        <taxon>Saccharomycetaceae</taxon>
        <taxon>Eremothecium</taxon>
    </lineage>
</organism>
<proteinExistence type="inferred from homology"/>
<reference key="1">
    <citation type="journal article" date="2004" name="Science">
        <title>The Ashbya gossypii genome as a tool for mapping the ancient Saccharomyces cerevisiae genome.</title>
        <authorList>
            <person name="Dietrich F.S."/>
            <person name="Voegeli S."/>
            <person name="Brachat S."/>
            <person name="Lerch A."/>
            <person name="Gates K."/>
            <person name="Steiner S."/>
            <person name="Mohr C."/>
            <person name="Poehlmann R."/>
            <person name="Luedi P."/>
            <person name="Choi S."/>
            <person name="Wing R.A."/>
            <person name="Flavier A."/>
            <person name="Gaffney T.D."/>
            <person name="Philippsen P."/>
        </authorList>
    </citation>
    <scope>NUCLEOTIDE SEQUENCE [LARGE SCALE GENOMIC DNA]</scope>
    <source>
        <strain>ATCC 10895 / CBS 109.51 / FGSC 9923 / NRRL Y-1056</strain>
    </source>
</reference>
<reference key="2">
    <citation type="journal article" date="2013" name="G3 (Bethesda)">
        <title>Genomes of Ashbya fungi isolated from insects reveal four mating-type loci, numerous translocations, lack of transposons, and distinct gene duplications.</title>
        <authorList>
            <person name="Dietrich F.S."/>
            <person name="Voegeli S."/>
            <person name="Kuo S."/>
            <person name="Philippsen P."/>
        </authorList>
    </citation>
    <scope>GENOME REANNOTATION</scope>
    <source>
        <strain>ATCC 10895 / CBS 109.51 / FGSC 9923 / NRRL Y-1056</strain>
    </source>
</reference>